<name>PT1_STREI</name>
<feature type="chain" id="PRO_0000147090" description="Phosphoenolpyruvate-protein phosphotransferase">
    <location>
        <begin position="1"/>
        <end position="577"/>
    </location>
</feature>
<feature type="active site" description="Tele-phosphohistidine intermediate" evidence="1">
    <location>
        <position position="191"/>
    </location>
</feature>
<feature type="active site" description="Proton donor" evidence="1">
    <location>
        <position position="506"/>
    </location>
</feature>
<feature type="binding site" evidence="2">
    <location>
        <position position="298"/>
    </location>
    <ligand>
        <name>phosphoenolpyruvate</name>
        <dbReference type="ChEBI" id="CHEBI:58702"/>
    </ligand>
</feature>
<feature type="binding site" evidence="1">
    <location>
        <position position="334"/>
    </location>
    <ligand>
        <name>phosphoenolpyruvate</name>
        <dbReference type="ChEBI" id="CHEBI:58702"/>
    </ligand>
</feature>
<feature type="binding site" evidence="1">
    <location>
        <position position="435"/>
    </location>
    <ligand>
        <name>Mg(2+)</name>
        <dbReference type="ChEBI" id="CHEBI:18420"/>
    </ligand>
</feature>
<feature type="binding site" evidence="1">
    <location>
        <begin position="458"/>
        <end position="459"/>
    </location>
    <ligand>
        <name>phosphoenolpyruvate</name>
        <dbReference type="ChEBI" id="CHEBI:58702"/>
    </ligand>
</feature>
<feature type="binding site" evidence="1">
    <location>
        <position position="459"/>
    </location>
    <ligand>
        <name>Mg(2+)</name>
        <dbReference type="ChEBI" id="CHEBI:18420"/>
    </ligand>
</feature>
<feature type="binding site" evidence="2">
    <location>
        <position position="469"/>
    </location>
    <ligand>
        <name>phosphoenolpyruvate</name>
        <dbReference type="ChEBI" id="CHEBI:58702"/>
    </ligand>
</feature>
<comment type="function">
    <text evidence="1">General (non sugar-specific) component of the phosphoenolpyruvate-dependent sugar phosphotransferase system (sugar PTS). This major carbohydrate active-transport system catalyzes the phosphorylation of incoming sugar substrates concomitantly with their translocation across the cell membrane. Enzyme I transfers the phosphoryl group from phosphoenolpyruvate (PEP) to the phosphoryl carrier protein (HPr).</text>
</comment>
<comment type="catalytic activity">
    <reaction evidence="1">
        <text>L-histidyl-[protein] + phosphoenolpyruvate = N(pros)-phospho-L-histidyl-[protein] + pyruvate</text>
        <dbReference type="Rhea" id="RHEA:23880"/>
        <dbReference type="Rhea" id="RHEA-COMP:9745"/>
        <dbReference type="Rhea" id="RHEA-COMP:9746"/>
        <dbReference type="ChEBI" id="CHEBI:15361"/>
        <dbReference type="ChEBI" id="CHEBI:29979"/>
        <dbReference type="ChEBI" id="CHEBI:58702"/>
        <dbReference type="ChEBI" id="CHEBI:64837"/>
        <dbReference type="EC" id="2.7.3.9"/>
    </reaction>
</comment>
<comment type="cofactor">
    <cofactor evidence="1">
        <name>Mg(2+)</name>
        <dbReference type="ChEBI" id="CHEBI:18420"/>
    </cofactor>
</comment>
<comment type="subunit">
    <text evidence="1">Homodimer.</text>
</comment>
<comment type="subcellular location">
    <subcellularLocation>
        <location evidence="3">Cytoplasm</location>
    </subcellularLocation>
</comment>
<comment type="induction">
    <text>Transcription of ptsI appears to be regulated in response to sugars supplied, i.e. is four-fold lower when cells were grown on lactose than when grown on glucose.</text>
</comment>
<comment type="domain">
    <text evidence="1">The N-terminal domain contains the HPr binding site, the central domain the pyrophosphate/phosphate carrier histidine, and the C-terminal domain the pyruvate binding site.</text>
</comment>
<comment type="miscellaneous">
    <text evidence="1">The reaction takes place in three steps, mediated by a phosphocarrier histidine residue located on the surface of the central domain. The two first partial reactions are catalyzed at an active site located on the N-terminal domain, and the third partial reaction is catalyzed at an active site located on the C-terminal domain. For catalytic turnover, the central domain swivels from the concave surface of the N-terminal domain to that of the C-terminal domain.</text>
</comment>
<comment type="similarity">
    <text evidence="3">Belongs to the PEP-utilizing enzyme family.</text>
</comment>
<keyword id="KW-0963">Cytoplasm</keyword>
<keyword id="KW-0418">Kinase</keyword>
<keyword id="KW-0460">Magnesium</keyword>
<keyword id="KW-0479">Metal-binding</keyword>
<keyword id="KW-0598">Phosphotransferase system</keyword>
<keyword id="KW-0762">Sugar transport</keyword>
<keyword id="KW-0808">Transferase</keyword>
<keyword id="KW-0813">Transport</keyword>
<gene>
    <name type="primary">ptsI</name>
</gene>
<sequence length="577" mass="63219">MTEMLKGIAASDGVAVAKAYLLVQPDLSFETVTVEDTSAEEARLDAALKASQDELSIIREKAVETLGEEAAAVFDAHLMVLADPEMISQIKETIRAKQTNAEAGLKEVTDMFITIFEGMEDNPYMQERAADIRDVAKRVLAHLLGAKLPNPATIDEESIVIAHDLTPSDTAQLNKQFVKAFVTNIGGRTSHSAIMARTLEIAAVLGTNDITSRVKDGDIVAVNGITGEVIINPTDEQVAEFKAAGEAYAKQKAEWALLKDAKTVTADGKHFELAANIGTPKDVEGVNANGAEAVGLYRTEFLYMDSQDFPTEDEQYEAYKAVLEGMNGKPVVVRTMDIGGDKELPYLDLPKEMNPFLGFRALRISISETGNAMFRTQIRALLRASVHGQLRIMFPMVALLKEFRAAKAIFDEEKANLKAEGVAVSDDIQVGIMIEIPAAAMLADQFAKEVDFFSIGTNDLIQYTMAADRMNEQVSYLYQPYNPSILRLINNVIKAAHAEGKWVGMCGEMAGDQKAVPLLVEMGLDEFSMSATSILRTRSLMKKLDTAKMQEYANRALTECSTMEEVLELSKEYVNVD</sequence>
<evidence type="ECO:0000250" key="1">
    <source>
        <dbReference type="UniProtKB" id="P08839"/>
    </source>
</evidence>
<evidence type="ECO:0000250" key="2">
    <source>
        <dbReference type="UniProtKB" id="P23533"/>
    </source>
</evidence>
<evidence type="ECO:0000305" key="3"/>
<dbReference type="EC" id="2.7.3.9" evidence="1"/>
<dbReference type="EMBL" id="AB027569">
    <property type="protein sequence ID" value="BAA78049.1"/>
    <property type="molecule type" value="Genomic_DNA"/>
</dbReference>
<dbReference type="SMR" id="Q9WXK9"/>
<dbReference type="STRING" id="1335.A6J79_06895"/>
<dbReference type="GO" id="GO:0005737">
    <property type="term" value="C:cytoplasm"/>
    <property type="evidence" value="ECO:0007669"/>
    <property type="project" value="UniProtKB-SubCell"/>
</dbReference>
<dbReference type="GO" id="GO:0016301">
    <property type="term" value="F:kinase activity"/>
    <property type="evidence" value="ECO:0007669"/>
    <property type="project" value="UniProtKB-KW"/>
</dbReference>
<dbReference type="GO" id="GO:0046872">
    <property type="term" value="F:metal ion binding"/>
    <property type="evidence" value="ECO:0007669"/>
    <property type="project" value="UniProtKB-KW"/>
</dbReference>
<dbReference type="GO" id="GO:0008965">
    <property type="term" value="F:phosphoenolpyruvate-protein phosphotransferase activity"/>
    <property type="evidence" value="ECO:0007669"/>
    <property type="project" value="UniProtKB-EC"/>
</dbReference>
<dbReference type="GO" id="GO:0009401">
    <property type="term" value="P:phosphoenolpyruvate-dependent sugar phosphotransferase system"/>
    <property type="evidence" value="ECO:0007669"/>
    <property type="project" value="UniProtKB-KW"/>
</dbReference>
<dbReference type="FunFam" id="1.10.274.10:FF:000001">
    <property type="entry name" value="Phosphoenolpyruvate-protein phosphotransferase"/>
    <property type="match status" value="1"/>
</dbReference>
<dbReference type="FunFam" id="3.20.20.60:FF:000007">
    <property type="entry name" value="Phosphoenolpyruvate-protein phosphotransferase"/>
    <property type="match status" value="1"/>
</dbReference>
<dbReference type="Gene3D" id="3.20.20.60">
    <property type="entry name" value="Phosphoenolpyruvate-binding domains"/>
    <property type="match status" value="1"/>
</dbReference>
<dbReference type="Gene3D" id="3.50.30.10">
    <property type="entry name" value="Phosphohistidine domain"/>
    <property type="match status" value="1"/>
</dbReference>
<dbReference type="Gene3D" id="1.10.274.10">
    <property type="entry name" value="PtsI, HPr-binding domain"/>
    <property type="match status" value="1"/>
</dbReference>
<dbReference type="InterPro" id="IPR008279">
    <property type="entry name" value="PEP-util_enz_mobile_dom"/>
</dbReference>
<dbReference type="InterPro" id="IPR050499">
    <property type="entry name" value="PEP-utilizing_PTS_enzyme"/>
</dbReference>
<dbReference type="InterPro" id="IPR018274">
    <property type="entry name" value="PEP_util_AS"/>
</dbReference>
<dbReference type="InterPro" id="IPR000121">
    <property type="entry name" value="PEP_util_C"/>
</dbReference>
<dbReference type="InterPro" id="IPR023151">
    <property type="entry name" value="PEP_util_CS"/>
</dbReference>
<dbReference type="InterPro" id="IPR036637">
    <property type="entry name" value="Phosphohistidine_dom_sf"/>
</dbReference>
<dbReference type="InterPro" id="IPR024692">
    <property type="entry name" value="PTS_EI"/>
</dbReference>
<dbReference type="InterPro" id="IPR006318">
    <property type="entry name" value="PTS_EI-like"/>
</dbReference>
<dbReference type="InterPro" id="IPR008731">
    <property type="entry name" value="PTS_EIN"/>
</dbReference>
<dbReference type="InterPro" id="IPR036618">
    <property type="entry name" value="PtsI_HPr-bd_sf"/>
</dbReference>
<dbReference type="InterPro" id="IPR015813">
    <property type="entry name" value="Pyrv/PenolPyrv_kinase-like_dom"/>
</dbReference>
<dbReference type="InterPro" id="IPR040442">
    <property type="entry name" value="Pyrv_kinase-like_dom_sf"/>
</dbReference>
<dbReference type="NCBIfam" id="TIGR01417">
    <property type="entry name" value="PTS_I_fam"/>
    <property type="match status" value="1"/>
</dbReference>
<dbReference type="PANTHER" id="PTHR46244">
    <property type="entry name" value="PHOSPHOENOLPYRUVATE-PROTEIN PHOSPHOTRANSFERASE"/>
    <property type="match status" value="1"/>
</dbReference>
<dbReference type="PANTHER" id="PTHR46244:SF3">
    <property type="entry name" value="PHOSPHOENOLPYRUVATE-PROTEIN PHOSPHOTRANSFERASE"/>
    <property type="match status" value="1"/>
</dbReference>
<dbReference type="Pfam" id="PF05524">
    <property type="entry name" value="PEP-utilisers_N"/>
    <property type="match status" value="1"/>
</dbReference>
<dbReference type="Pfam" id="PF00391">
    <property type="entry name" value="PEP-utilizers"/>
    <property type="match status" value="1"/>
</dbReference>
<dbReference type="Pfam" id="PF02896">
    <property type="entry name" value="PEP-utilizers_C"/>
    <property type="match status" value="1"/>
</dbReference>
<dbReference type="PIRSF" id="PIRSF000732">
    <property type="entry name" value="PTS_enzyme_I"/>
    <property type="match status" value="1"/>
</dbReference>
<dbReference type="PRINTS" id="PR01736">
    <property type="entry name" value="PHPHTRNFRASE"/>
</dbReference>
<dbReference type="SUPFAM" id="SSF47831">
    <property type="entry name" value="Enzyme I of the PEP:sugar phosphotransferase system HPr-binding (sub)domain"/>
    <property type="match status" value="1"/>
</dbReference>
<dbReference type="SUPFAM" id="SSF51621">
    <property type="entry name" value="Phosphoenolpyruvate/pyruvate domain"/>
    <property type="match status" value="1"/>
</dbReference>
<dbReference type="SUPFAM" id="SSF52009">
    <property type="entry name" value="Phosphohistidine domain"/>
    <property type="match status" value="1"/>
</dbReference>
<dbReference type="PROSITE" id="PS00742">
    <property type="entry name" value="PEP_ENZYMES_2"/>
    <property type="match status" value="1"/>
</dbReference>
<dbReference type="PROSITE" id="PS00370">
    <property type="entry name" value="PEP_ENZYMES_PHOS_SITE"/>
    <property type="match status" value="1"/>
</dbReference>
<protein>
    <recommendedName>
        <fullName evidence="1">Phosphoenolpyruvate-protein phosphotransferase</fullName>
        <ecNumber evidence="1">2.7.3.9</ecNumber>
    </recommendedName>
    <alternativeName>
        <fullName evidence="1">Phosphotransferase system, enzyme I</fullName>
    </alternativeName>
</protein>
<accession>Q9WXK9</accession>
<organism>
    <name type="scientific">Streptococcus equinus</name>
    <name type="common">Streptococcus bovis</name>
    <dbReference type="NCBI Taxonomy" id="1335"/>
    <lineage>
        <taxon>Bacteria</taxon>
        <taxon>Bacillati</taxon>
        <taxon>Bacillota</taxon>
        <taxon>Bacilli</taxon>
        <taxon>Lactobacillales</taxon>
        <taxon>Streptococcaceae</taxon>
        <taxon>Streptococcus</taxon>
    </lineage>
</organism>
<reference key="1">
    <citation type="journal article" date="2003" name="Arch. Microbiol.">
        <title>Molecular characterization of HPr and related enzymes, and regulation of HPr phosphorylation in the ruminal bacterium Streptococcus bovis.</title>
        <authorList>
            <person name="Asanuma N."/>
            <person name="Hino T."/>
        </authorList>
    </citation>
    <scope>NUCLEOTIDE SEQUENCE [GENOMIC DNA]</scope>
    <source>
        <strain>ATCC 700410 / JB1</strain>
    </source>
</reference>
<proteinExistence type="evidence at transcript level"/>